<accession>Q54K69</accession>
<organism>
    <name type="scientific">Dictyostelium discoideum</name>
    <name type="common">Social amoeba</name>
    <dbReference type="NCBI Taxonomy" id="44689"/>
    <lineage>
        <taxon>Eukaryota</taxon>
        <taxon>Amoebozoa</taxon>
        <taxon>Evosea</taxon>
        <taxon>Eumycetozoa</taxon>
        <taxon>Dictyostelia</taxon>
        <taxon>Dictyosteliales</taxon>
        <taxon>Dictyosteliaceae</taxon>
        <taxon>Dictyostelium</taxon>
    </lineage>
</organism>
<feature type="chain" id="PRO_0000312559" description="Ras-related protein Rab-7B">
    <location>
        <begin position="1"/>
        <end position="197"/>
    </location>
</feature>
<feature type="short sequence motif" description="Effector region" evidence="1">
    <location>
        <begin position="31"/>
        <end position="39"/>
    </location>
</feature>
<feature type="binding site" evidence="1">
    <location>
        <begin position="14"/>
        <end position="21"/>
    </location>
    <ligand>
        <name>GTP</name>
        <dbReference type="ChEBI" id="CHEBI:37565"/>
    </ligand>
</feature>
<feature type="binding site" evidence="1">
    <location>
        <begin position="33"/>
        <end position="38"/>
    </location>
    <ligand>
        <name>GTP</name>
        <dbReference type="ChEBI" id="CHEBI:37565"/>
    </ligand>
</feature>
<feature type="binding site" evidence="1">
    <location>
        <begin position="57"/>
        <end position="61"/>
    </location>
    <ligand>
        <name>GTP</name>
        <dbReference type="ChEBI" id="CHEBI:37565"/>
    </ligand>
</feature>
<feature type="binding site" evidence="1">
    <location>
        <begin position="119"/>
        <end position="122"/>
    </location>
    <ligand>
        <name>GTP</name>
        <dbReference type="ChEBI" id="CHEBI:37565"/>
    </ligand>
</feature>
<feature type="binding site" evidence="1">
    <location>
        <begin position="152"/>
        <end position="153"/>
    </location>
    <ligand>
        <name>GTP</name>
        <dbReference type="ChEBI" id="CHEBI:37565"/>
    </ligand>
</feature>
<feature type="lipid moiety-binding region" description="S-geranylgeranyl cysteine" evidence="1">
    <location>
        <position position="196"/>
    </location>
</feature>
<feature type="lipid moiety-binding region" description="S-geranylgeranyl cysteine" evidence="1">
    <location>
        <position position="197"/>
    </location>
</feature>
<proteinExistence type="inferred from homology"/>
<evidence type="ECO:0000250" key="1"/>
<evidence type="ECO:0000305" key="2"/>
<reference key="1">
    <citation type="journal article" date="2005" name="Nature">
        <title>The genome of the social amoeba Dictyostelium discoideum.</title>
        <authorList>
            <person name="Eichinger L."/>
            <person name="Pachebat J.A."/>
            <person name="Gloeckner G."/>
            <person name="Rajandream M.A."/>
            <person name="Sucgang R."/>
            <person name="Berriman M."/>
            <person name="Song J."/>
            <person name="Olsen R."/>
            <person name="Szafranski K."/>
            <person name="Xu Q."/>
            <person name="Tunggal B."/>
            <person name="Kummerfeld S."/>
            <person name="Madera M."/>
            <person name="Konfortov B.A."/>
            <person name="Rivero F."/>
            <person name="Bankier A.T."/>
            <person name="Lehmann R."/>
            <person name="Hamlin N."/>
            <person name="Davies R."/>
            <person name="Gaudet P."/>
            <person name="Fey P."/>
            <person name="Pilcher K."/>
            <person name="Chen G."/>
            <person name="Saunders D."/>
            <person name="Sodergren E.J."/>
            <person name="Davis P."/>
            <person name="Kerhornou A."/>
            <person name="Nie X."/>
            <person name="Hall N."/>
            <person name="Anjard C."/>
            <person name="Hemphill L."/>
            <person name="Bason N."/>
            <person name="Farbrother P."/>
            <person name="Desany B."/>
            <person name="Just E."/>
            <person name="Morio T."/>
            <person name="Rost R."/>
            <person name="Churcher C.M."/>
            <person name="Cooper J."/>
            <person name="Haydock S."/>
            <person name="van Driessche N."/>
            <person name="Cronin A."/>
            <person name="Goodhead I."/>
            <person name="Muzny D.M."/>
            <person name="Mourier T."/>
            <person name="Pain A."/>
            <person name="Lu M."/>
            <person name="Harper D."/>
            <person name="Lindsay R."/>
            <person name="Hauser H."/>
            <person name="James K.D."/>
            <person name="Quiles M."/>
            <person name="Madan Babu M."/>
            <person name="Saito T."/>
            <person name="Buchrieser C."/>
            <person name="Wardroper A."/>
            <person name="Felder M."/>
            <person name="Thangavelu M."/>
            <person name="Johnson D."/>
            <person name="Knights A."/>
            <person name="Loulseged H."/>
            <person name="Mungall K.L."/>
            <person name="Oliver K."/>
            <person name="Price C."/>
            <person name="Quail M.A."/>
            <person name="Urushihara H."/>
            <person name="Hernandez J."/>
            <person name="Rabbinowitsch E."/>
            <person name="Steffen D."/>
            <person name="Sanders M."/>
            <person name="Ma J."/>
            <person name="Kohara Y."/>
            <person name="Sharp S."/>
            <person name="Simmonds M.N."/>
            <person name="Spiegler S."/>
            <person name="Tivey A."/>
            <person name="Sugano S."/>
            <person name="White B."/>
            <person name="Walker D."/>
            <person name="Woodward J.R."/>
            <person name="Winckler T."/>
            <person name="Tanaka Y."/>
            <person name="Shaulsky G."/>
            <person name="Schleicher M."/>
            <person name="Weinstock G.M."/>
            <person name="Rosenthal A."/>
            <person name="Cox E.C."/>
            <person name="Chisholm R.L."/>
            <person name="Gibbs R.A."/>
            <person name="Loomis W.F."/>
            <person name="Platzer M."/>
            <person name="Kay R.R."/>
            <person name="Williams J.G."/>
            <person name="Dear P.H."/>
            <person name="Noegel A.A."/>
            <person name="Barrell B.G."/>
            <person name="Kuspa A."/>
        </authorList>
    </citation>
    <scope>NUCLEOTIDE SEQUENCE [LARGE SCALE GENOMIC DNA]</scope>
    <source>
        <strain>AX4</strain>
    </source>
</reference>
<gene>
    <name type="primary">rab7B</name>
    <name type="ORF">DDB_G0287553</name>
</gene>
<protein>
    <recommendedName>
        <fullName>Ras-related protein Rab-7B</fullName>
    </recommendedName>
</protein>
<sequence>MTKGRKIIKVVIIGEKSVGKTSILRRYVDKRFVTLKPTIGVDFVMVSENMVTLQLWDTSGQERFRSLEISYYRGADYCILVFDVTNEKTLYDLKLWRDDFIEKTEIRDPILFPFIILGNKIDDPNRVVTEKAAIQWCKDNIGGNLTYFDTSAKDNINIEQVFKHISNQCENQPQSNEIPPEQLISLTEKKSNQSSCC</sequence>
<keyword id="KW-0342">GTP-binding</keyword>
<keyword id="KW-0449">Lipoprotein</keyword>
<keyword id="KW-0547">Nucleotide-binding</keyword>
<keyword id="KW-0636">Prenylation</keyword>
<keyword id="KW-0653">Protein transport</keyword>
<keyword id="KW-1185">Reference proteome</keyword>
<keyword id="KW-0813">Transport</keyword>
<comment type="function">
    <text evidence="1">Protein transport. Probably involved in vesicular traffic (By similarity).</text>
</comment>
<comment type="similarity">
    <text evidence="2">Belongs to the small GTPase superfamily. Rab family.</text>
</comment>
<name>RAB7B_DICDI</name>
<dbReference type="EMBL" id="AAFI02000102">
    <property type="protein sequence ID" value="EAL63676.1"/>
    <property type="molecule type" value="Genomic_DNA"/>
</dbReference>
<dbReference type="RefSeq" id="XP_637186.1">
    <property type="nucleotide sequence ID" value="XM_632094.1"/>
</dbReference>
<dbReference type="SMR" id="Q54K69"/>
<dbReference type="FunCoup" id="Q54K69">
    <property type="interactions" value="128"/>
</dbReference>
<dbReference type="STRING" id="44689.Q54K69"/>
<dbReference type="PaxDb" id="44689-DDB0229399"/>
<dbReference type="EnsemblProtists" id="EAL63676">
    <property type="protein sequence ID" value="EAL63676"/>
    <property type="gene ID" value="DDB_G0287553"/>
</dbReference>
<dbReference type="GeneID" id="8626187"/>
<dbReference type="KEGG" id="ddi:DDB_G0287553"/>
<dbReference type="dictyBase" id="DDB_G0287553">
    <property type="gene designation" value="rab7B"/>
</dbReference>
<dbReference type="VEuPathDB" id="AmoebaDB:DDB_G0287553"/>
<dbReference type="eggNOG" id="KOG0394">
    <property type="taxonomic scope" value="Eukaryota"/>
</dbReference>
<dbReference type="HOGENOM" id="CLU_041217_10_6_1"/>
<dbReference type="InParanoid" id="Q54K69"/>
<dbReference type="OMA" id="EQVFKHI"/>
<dbReference type="PhylomeDB" id="Q54K69"/>
<dbReference type="Reactome" id="R-DDI-6798695">
    <property type="pathway name" value="Neutrophil degranulation"/>
</dbReference>
<dbReference type="Reactome" id="R-DDI-8854214">
    <property type="pathway name" value="TBC/RABGAPs"/>
</dbReference>
<dbReference type="Reactome" id="R-DDI-8873719">
    <property type="pathway name" value="RAB geranylgeranylation"/>
</dbReference>
<dbReference type="Reactome" id="R-DDI-8876198">
    <property type="pathway name" value="RAB GEFs exchange GTP for GDP on RABs"/>
</dbReference>
<dbReference type="Reactome" id="R-DDI-9706019">
    <property type="pathway name" value="RHOBTB3 ATPase cycle"/>
</dbReference>
<dbReference type="PRO" id="PR:Q54K69"/>
<dbReference type="Proteomes" id="UP000002195">
    <property type="component" value="Chromosome 5"/>
</dbReference>
<dbReference type="GO" id="GO:0005770">
    <property type="term" value="C:late endosome"/>
    <property type="evidence" value="ECO:0000318"/>
    <property type="project" value="GO_Central"/>
</dbReference>
<dbReference type="GO" id="GO:0005764">
    <property type="term" value="C:lysosome"/>
    <property type="evidence" value="ECO:0000318"/>
    <property type="project" value="GO_Central"/>
</dbReference>
<dbReference type="GO" id="GO:0045335">
    <property type="term" value="C:phagocytic vesicle"/>
    <property type="evidence" value="ECO:0000318"/>
    <property type="project" value="GO_Central"/>
</dbReference>
<dbReference type="GO" id="GO:0005525">
    <property type="term" value="F:GTP binding"/>
    <property type="evidence" value="ECO:0007669"/>
    <property type="project" value="UniProtKB-KW"/>
</dbReference>
<dbReference type="GO" id="GO:0003924">
    <property type="term" value="F:GTPase activity"/>
    <property type="evidence" value="ECO:0007669"/>
    <property type="project" value="InterPro"/>
</dbReference>
<dbReference type="GO" id="GO:0006971">
    <property type="term" value="P:hypotonic response"/>
    <property type="evidence" value="ECO:0007007"/>
    <property type="project" value="dictyBase"/>
</dbReference>
<dbReference type="GO" id="GO:0090385">
    <property type="term" value="P:phagosome-lysosome fusion"/>
    <property type="evidence" value="ECO:0000318"/>
    <property type="project" value="GO_Central"/>
</dbReference>
<dbReference type="GO" id="GO:0015031">
    <property type="term" value="P:protein transport"/>
    <property type="evidence" value="ECO:0007669"/>
    <property type="project" value="UniProtKB-KW"/>
</dbReference>
<dbReference type="FunFam" id="3.40.50.300:FF:000751">
    <property type="entry name" value="Rab family GTPase, putative"/>
    <property type="match status" value="1"/>
</dbReference>
<dbReference type="Gene3D" id="3.40.50.300">
    <property type="entry name" value="P-loop containing nucleotide triphosphate hydrolases"/>
    <property type="match status" value="1"/>
</dbReference>
<dbReference type="InterPro" id="IPR027417">
    <property type="entry name" value="P-loop_NTPase"/>
</dbReference>
<dbReference type="InterPro" id="IPR005225">
    <property type="entry name" value="Small_GTP-bd"/>
</dbReference>
<dbReference type="InterPro" id="IPR001806">
    <property type="entry name" value="Small_GTPase"/>
</dbReference>
<dbReference type="NCBIfam" id="TIGR00231">
    <property type="entry name" value="small_GTP"/>
    <property type="match status" value="1"/>
</dbReference>
<dbReference type="PANTHER" id="PTHR47981">
    <property type="entry name" value="RAB FAMILY"/>
    <property type="match status" value="1"/>
</dbReference>
<dbReference type="PANTHER" id="PTHR47981:SF19">
    <property type="entry name" value="RAS-RELATED PROTEIN RAB-7B"/>
    <property type="match status" value="1"/>
</dbReference>
<dbReference type="Pfam" id="PF00071">
    <property type="entry name" value="Ras"/>
    <property type="match status" value="1"/>
</dbReference>
<dbReference type="PRINTS" id="PR00449">
    <property type="entry name" value="RASTRNSFRMNG"/>
</dbReference>
<dbReference type="SMART" id="SM00177">
    <property type="entry name" value="ARF"/>
    <property type="match status" value="1"/>
</dbReference>
<dbReference type="SMART" id="SM00175">
    <property type="entry name" value="RAB"/>
    <property type="match status" value="1"/>
</dbReference>
<dbReference type="SMART" id="SM00176">
    <property type="entry name" value="RAN"/>
    <property type="match status" value="1"/>
</dbReference>
<dbReference type="SMART" id="SM00173">
    <property type="entry name" value="RAS"/>
    <property type="match status" value="1"/>
</dbReference>
<dbReference type="SMART" id="SM00174">
    <property type="entry name" value="RHO"/>
    <property type="match status" value="1"/>
</dbReference>
<dbReference type="SUPFAM" id="SSF52540">
    <property type="entry name" value="P-loop containing nucleoside triphosphate hydrolases"/>
    <property type="match status" value="1"/>
</dbReference>
<dbReference type="PROSITE" id="PS51419">
    <property type="entry name" value="RAB"/>
    <property type="match status" value="1"/>
</dbReference>